<gene>
    <name type="ordered locus">BQ2027_MB2019</name>
</gene>
<organism>
    <name type="scientific">Mycobacterium bovis (strain ATCC BAA-935 / AF2122/97)</name>
    <dbReference type="NCBI Taxonomy" id="233413"/>
    <lineage>
        <taxon>Bacteria</taxon>
        <taxon>Bacillati</taxon>
        <taxon>Actinomycetota</taxon>
        <taxon>Actinomycetes</taxon>
        <taxon>Mycobacteriales</taxon>
        <taxon>Mycobacteriaceae</taxon>
        <taxon>Mycobacterium</taxon>
        <taxon>Mycobacterium tuberculosis complex</taxon>
    </lineage>
</organism>
<reference key="1">
    <citation type="journal article" date="2003" name="Proc. Natl. Acad. Sci. U.S.A.">
        <title>The complete genome sequence of Mycobacterium bovis.</title>
        <authorList>
            <person name="Garnier T."/>
            <person name="Eiglmeier K."/>
            <person name="Camus J.-C."/>
            <person name="Medina N."/>
            <person name="Mansoor H."/>
            <person name="Pryor M."/>
            <person name="Duthoy S."/>
            <person name="Grondin S."/>
            <person name="Lacroix C."/>
            <person name="Monsempe C."/>
            <person name="Simon S."/>
            <person name="Harris B."/>
            <person name="Atkin R."/>
            <person name="Doggett J."/>
            <person name="Mayes R."/>
            <person name="Keating L."/>
            <person name="Wheeler P.R."/>
            <person name="Parkhill J."/>
            <person name="Barrell B.G."/>
            <person name="Cole S.T."/>
            <person name="Gordon S.V."/>
            <person name="Hewinson R.G."/>
        </authorList>
    </citation>
    <scope>NUCLEOTIDE SEQUENCE [LARGE SCALE GENOMIC DNA]</scope>
    <source>
        <strain>ATCC BAA-935 / AF2122/97</strain>
    </source>
</reference>
<reference key="2">
    <citation type="journal article" date="2017" name="Genome Announc.">
        <title>Updated reference genome sequence and annotation of Mycobacterium bovis AF2122/97.</title>
        <authorList>
            <person name="Malone K.M."/>
            <person name="Farrell D."/>
            <person name="Stuber T.P."/>
            <person name="Schubert O.T."/>
            <person name="Aebersold R."/>
            <person name="Robbe-Austerman S."/>
            <person name="Gordon S.V."/>
        </authorList>
    </citation>
    <scope>NUCLEOTIDE SEQUENCE [LARGE SCALE GENOMIC DNA]</scope>
    <scope>GENOME REANNOTATION</scope>
    <source>
        <strain>ATCC BAA-935 / AF2122/97</strain>
    </source>
</reference>
<accession>P0A5F8</accession>
<accession>A0A1R3XZY2</accession>
<accession>Q10862</accession>
<accession>X2BJQ9</accession>
<evidence type="ECO:0000250" key="1">
    <source>
        <dbReference type="UniProtKB" id="P9WFD7"/>
    </source>
</evidence>
<evidence type="ECO:0000305" key="2"/>
<name>Y2019_MYCBO</name>
<feature type="chain" id="PRO_0000103925" description="Universal stress protein Mb2019">
    <location>
        <begin position="1"/>
        <end position="317"/>
    </location>
</feature>
<feature type="binding site" evidence="1">
    <location>
        <position position="13"/>
    </location>
    <ligand>
        <name>ATP</name>
        <dbReference type="ChEBI" id="CHEBI:30616"/>
        <label>1</label>
    </ligand>
</feature>
<feature type="binding site" evidence="1">
    <location>
        <begin position="128"/>
        <end position="134"/>
    </location>
    <ligand>
        <name>ATP</name>
        <dbReference type="ChEBI" id="CHEBI:30616"/>
        <label>1</label>
    </ligand>
</feature>
<feature type="binding site" evidence="1">
    <location>
        <begin position="142"/>
        <end position="143"/>
    </location>
    <ligand>
        <name>ATP</name>
        <dbReference type="ChEBI" id="CHEBI:30616"/>
        <label>1</label>
    </ligand>
</feature>
<feature type="binding site" evidence="1">
    <location>
        <position position="175"/>
    </location>
    <ligand>
        <name>ATP</name>
        <dbReference type="ChEBI" id="CHEBI:30616"/>
        <label>2</label>
    </ligand>
</feature>
<feature type="binding site" evidence="1">
    <location>
        <position position="208"/>
    </location>
    <ligand>
        <name>ATP</name>
        <dbReference type="ChEBI" id="CHEBI:30616"/>
        <label>2</label>
    </ligand>
</feature>
<feature type="binding site" evidence="1">
    <location>
        <begin position="277"/>
        <end position="283"/>
    </location>
    <ligand>
        <name>ATP</name>
        <dbReference type="ChEBI" id="CHEBI:30616"/>
        <label>2</label>
    </ligand>
</feature>
<feature type="binding site" evidence="1">
    <location>
        <begin position="291"/>
        <end position="293"/>
    </location>
    <ligand>
        <name>ATP</name>
        <dbReference type="ChEBI" id="CHEBI:30616"/>
        <label>2</label>
    </ligand>
</feature>
<dbReference type="EMBL" id="LT708304">
    <property type="protein sequence ID" value="SIU00626.1"/>
    <property type="molecule type" value="Genomic_DNA"/>
</dbReference>
<dbReference type="RefSeq" id="NP_855669.1">
    <property type="nucleotide sequence ID" value="NC_002945.3"/>
</dbReference>
<dbReference type="RefSeq" id="WP_003899121.1">
    <property type="nucleotide sequence ID" value="NC_002945.4"/>
</dbReference>
<dbReference type="SMR" id="P0A5F8"/>
<dbReference type="KEGG" id="mbo:BQ2027_MB2019"/>
<dbReference type="PATRIC" id="fig|233413.5.peg.2218"/>
<dbReference type="Proteomes" id="UP000001419">
    <property type="component" value="Chromosome"/>
</dbReference>
<dbReference type="GO" id="GO:0005524">
    <property type="term" value="F:ATP binding"/>
    <property type="evidence" value="ECO:0007669"/>
    <property type="project" value="UniProtKB-KW"/>
</dbReference>
<dbReference type="CDD" id="cd23944">
    <property type="entry name" value="USP_Rv2623_repeat1"/>
    <property type="match status" value="1"/>
</dbReference>
<dbReference type="CDD" id="cd23661">
    <property type="entry name" value="USP_Rv2623_repeat2"/>
    <property type="match status" value="1"/>
</dbReference>
<dbReference type="FunFam" id="3.40.50.620:FF:000123">
    <property type="entry name" value="Universal stress protein family"/>
    <property type="match status" value="2"/>
</dbReference>
<dbReference type="Gene3D" id="3.40.50.620">
    <property type="entry name" value="HUPs"/>
    <property type="match status" value="2"/>
</dbReference>
<dbReference type="InterPro" id="IPR014729">
    <property type="entry name" value="Rossmann-like_a/b/a_fold"/>
</dbReference>
<dbReference type="InterPro" id="IPR006015">
    <property type="entry name" value="Universal_stress_UspA"/>
</dbReference>
<dbReference type="InterPro" id="IPR006016">
    <property type="entry name" value="UspA"/>
</dbReference>
<dbReference type="PANTHER" id="PTHR46268">
    <property type="entry name" value="STRESS RESPONSE PROTEIN NHAX"/>
    <property type="match status" value="1"/>
</dbReference>
<dbReference type="PANTHER" id="PTHR46268:SF27">
    <property type="entry name" value="UNIVERSAL STRESS PROTEIN RV2623"/>
    <property type="match status" value="1"/>
</dbReference>
<dbReference type="Pfam" id="PF00582">
    <property type="entry name" value="Usp"/>
    <property type="match status" value="2"/>
</dbReference>
<dbReference type="PRINTS" id="PR01438">
    <property type="entry name" value="UNVRSLSTRESS"/>
</dbReference>
<dbReference type="SUPFAM" id="SSF52402">
    <property type="entry name" value="Adenine nucleotide alpha hydrolases-like"/>
    <property type="match status" value="2"/>
</dbReference>
<proteinExistence type="inferred from homology"/>
<protein>
    <recommendedName>
        <fullName>Universal stress protein Mb2019</fullName>
        <shortName>USP Mb2019</shortName>
    </recommendedName>
</protein>
<sequence length="317" mass="33880">MSAQQTNLGIVVGVDGSPCSHTAVEWAARDAQMRNVALRVVQVVPPVITAPEGWAFEYSRFQEAQKREIVEHSYLVAQAHQIVEQAHKVALEASSSGRAAQITGEVLHGQIVPTLANISRQVAMVVLGYRGQGAVAGALLGSVSSSLVRHAHGPVAVIPEEPRPARPPHAPVVVGIDGSPTSGLAAEIAFDEASRRGVDLVALHAWSDMGPLDFPRLNWAPIEWRNLEDEQEKMLARRLSGWQDRYPDVVVHKVVVCDRPAPRLLELAQTAQLVVVGSHGRGGFPGMHLGSVSRAVVNSGQAPVIVARIPQDPAVPA</sequence>
<keyword id="KW-0067">ATP-binding</keyword>
<keyword id="KW-0547">Nucleotide-binding</keyword>
<keyword id="KW-1185">Reference proteome</keyword>
<comment type="similarity">
    <text evidence="2">Belongs to the universal stress protein A family.</text>
</comment>